<protein>
    <recommendedName>
        <fullName evidence="1">UPF0434 protein TERTU_2813</fullName>
    </recommendedName>
</protein>
<gene>
    <name type="ordered locus">TERTU_2813</name>
</gene>
<sequence>MIDQKLLSILVCPVSKAPLEFVADKQELVCAASGLAYPIRDGIPVMLETEARELTLEEKEQYSH</sequence>
<feature type="chain" id="PRO_1000213786" description="UPF0434 protein TERTU_2813">
    <location>
        <begin position="1"/>
        <end position="64"/>
    </location>
</feature>
<dbReference type="EMBL" id="CP001614">
    <property type="protein sequence ID" value="ACR12534.1"/>
    <property type="molecule type" value="Genomic_DNA"/>
</dbReference>
<dbReference type="RefSeq" id="WP_015818646.1">
    <property type="nucleotide sequence ID" value="NC_012997.1"/>
</dbReference>
<dbReference type="SMR" id="C5BMQ2"/>
<dbReference type="STRING" id="377629.TERTU_2813"/>
<dbReference type="GeneID" id="58410258"/>
<dbReference type="KEGG" id="ttu:TERTU_2813"/>
<dbReference type="eggNOG" id="COG2835">
    <property type="taxonomic scope" value="Bacteria"/>
</dbReference>
<dbReference type="HOGENOM" id="CLU_155659_3_1_6"/>
<dbReference type="OrthoDB" id="9812205at2"/>
<dbReference type="Proteomes" id="UP000009080">
    <property type="component" value="Chromosome"/>
</dbReference>
<dbReference type="GO" id="GO:0005829">
    <property type="term" value="C:cytosol"/>
    <property type="evidence" value="ECO:0007669"/>
    <property type="project" value="TreeGrafter"/>
</dbReference>
<dbReference type="FunFam" id="2.20.25.10:FF:000002">
    <property type="entry name" value="UPF0434 protein YcaR"/>
    <property type="match status" value="1"/>
</dbReference>
<dbReference type="Gene3D" id="2.20.25.10">
    <property type="match status" value="1"/>
</dbReference>
<dbReference type="HAMAP" id="MF_01187">
    <property type="entry name" value="UPF0434"/>
    <property type="match status" value="1"/>
</dbReference>
<dbReference type="InterPro" id="IPR005651">
    <property type="entry name" value="Trm112-like"/>
</dbReference>
<dbReference type="PANTHER" id="PTHR33505:SF4">
    <property type="entry name" value="PROTEIN PREY, MITOCHONDRIAL"/>
    <property type="match status" value="1"/>
</dbReference>
<dbReference type="PANTHER" id="PTHR33505">
    <property type="entry name" value="ZGC:162634"/>
    <property type="match status" value="1"/>
</dbReference>
<dbReference type="Pfam" id="PF03966">
    <property type="entry name" value="Trm112p"/>
    <property type="match status" value="1"/>
</dbReference>
<dbReference type="SUPFAM" id="SSF158997">
    <property type="entry name" value="Trm112p-like"/>
    <property type="match status" value="1"/>
</dbReference>
<organism>
    <name type="scientific">Teredinibacter turnerae (strain ATCC 39867 / T7901)</name>
    <dbReference type="NCBI Taxonomy" id="377629"/>
    <lineage>
        <taxon>Bacteria</taxon>
        <taxon>Pseudomonadati</taxon>
        <taxon>Pseudomonadota</taxon>
        <taxon>Gammaproteobacteria</taxon>
        <taxon>Cellvibrionales</taxon>
        <taxon>Cellvibrionaceae</taxon>
        <taxon>Teredinibacter</taxon>
    </lineage>
</organism>
<reference key="1">
    <citation type="journal article" date="2009" name="PLoS ONE">
        <title>The complete genome of Teredinibacter turnerae T7901: an intracellular endosymbiont of marine wood-boring bivalves (shipworms).</title>
        <authorList>
            <person name="Yang J.C."/>
            <person name="Madupu R."/>
            <person name="Durkin A.S."/>
            <person name="Ekborg N.A."/>
            <person name="Pedamallu C.S."/>
            <person name="Hostetler J.B."/>
            <person name="Radune D."/>
            <person name="Toms B.S."/>
            <person name="Henrissat B."/>
            <person name="Coutinho P.M."/>
            <person name="Schwarz S."/>
            <person name="Field L."/>
            <person name="Trindade-Silva A.E."/>
            <person name="Soares C.A.G."/>
            <person name="Elshahawi S."/>
            <person name="Hanora A."/>
            <person name="Schmidt E.W."/>
            <person name="Haygood M.G."/>
            <person name="Posfai J."/>
            <person name="Benner J."/>
            <person name="Madinger C."/>
            <person name="Nove J."/>
            <person name="Anton B."/>
            <person name="Chaudhary K."/>
            <person name="Foster J."/>
            <person name="Holman A."/>
            <person name="Kumar S."/>
            <person name="Lessard P.A."/>
            <person name="Luyten Y.A."/>
            <person name="Slatko B."/>
            <person name="Wood N."/>
            <person name="Wu B."/>
            <person name="Teplitski M."/>
            <person name="Mougous J.D."/>
            <person name="Ward N."/>
            <person name="Eisen J.A."/>
            <person name="Badger J.H."/>
            <person name="Distel D.L."/>
        </authorList>
    </citation>
    <scope>NUCLEOTIDE SEQUENCE [LARGE SCALE GENOMIC DNA]</scope>
    <source>
        <strain>ATCC 39867 / T7901</strain>
    </source>
</reference>
<proteinExistence type="inferred from homology"/>
<evidence type="ECO:0000255" key="1">
    <source>
        <dbReference type="HAMAP-Rule" id="MF_01187"/>
    </source>
</evidence>
<name>Y2813_TERTT</name>
<comment type="similarity">
    <text evidence="1">Belongs to the UPF0434 family.</text>
</comment>
<accession>C5BMQ2</accession>
<keyword id="KW-1185">Reference proteome</keyword>